<proteinExistence type="inferred from homology"/>
<keyword id="KW-0456">Lyase</keyword>
<keyword id="KW-0479">Metal-binding</keyword>
<keyword id="KW-0862">Zinc</keyword>
<protein>
    <recommendedName>
        <fullName evidence="1">D-tagatose-1,6-bisphosphate aldolase subunit KbaY</fullName>
        <shortName evidence="1">TBPA</shortName>
        <shortName evidence="1">TagBP aldolase</shortName>
        <ecNumber evidence="1">4.1.2.40</ecNumber>
    </recommendedName>
    <alternativeName>
        <fullName evidence="1">D-tagatose-bisphosphate aldolase class II</fullName>
    </alternativeName>
    <alternativeName>
        <fullName evidence="1">Ketose 1,6-bisphosphate aldolase class II</fullName>
    </alternativeName>
    <alternativeName>
        <fullName evidence="1">Tagatose-bisphosphate aldolase</fullName>
    </alternativeName>
</protein>
<sequence length="286" mass="31338">MSIISTKYLLQDAQANGYAVPAFNIHNAETIQAILEVCSEMRSPVILAGTPGTFKHIALEEIYALCSAYSTTYNMPLALHLDHHESLDDIRRKVHAGVRSAMIDGSHFPFDENVKLVKSVVDFCHSQDCSVEAELGRLGGVEDDMSVDAESAFLTDPQEAKRFVELTGVDSLAVAIGTAHGLYSKTPKIDFQRLAEIREVVDVPLVLHGASDVPDEFVRRTIELGVTKVNVATELKIAFAGAVKAWFAENPQGNDPRYYMRVGMDAMKEVVRNKINVCGSANRISA</sequence>
<gene>
    <name evidence="1" type="primary">kbaY</name>
    <name type="ordered locus">EcSMS35_3436</name>
</gene>
<feature type="chain" id="PRO_0000355323" description="D-tagatose-1,6-bisphosphate aldolase subunit KbaY">
    <location>
        <begin position="1"/>
        <end position="286"/>
    </location>
</feature>
<feature type="active site" description="Proton donor" evidence="1">
    <location>
        <position position="82"/>
    </location>
</feature>
<feature type="binding site" evidence="1">
    <location>
        <position position="83"/>
    </location>
    <ligand>
        <name>Zn(2+)</name>
        <dbReference type="ChEBI" id="CHEBI:29105"/>
        <note>catalytic</note>
    </ligand>
</feature>
<feature type="binding site" evidence="1">
    <location>
        <position position="180"/>
    </location>
    <ligand>
        <name>Zn(2+)</name>
        <dbReference type="ChEBI" id="CHEBI:29105"/>
        <note>catalytic</note>
    </ligand>
</feature>
<feature type="binding site" evidence="1">
    <location>
        <position position="181"/>
    </location>
    <ligand>
        <name>dihydroxyacetone phosphate</name>
        <dbReference type="ChEBI" id="CHEBI:57642"/>
    </ligand>
</feature>
<feature type="binding site" evidence="1">
    <location>
        <position position="208"/>
    </location>
    <ligand>
        <name>Zn(2+)</name>
        <dbReference type="ChEBI" id="CHEBI:29105"/>
        <note>catalytic</note>
    </ligand>
</feature>
<feature type="binding site" evidence="1">
    <location>
        <begin position="209"/>
        <end position="211"/>
    </location>
    <ligand>
        <name>dihydroxyacetone phosphate</name>
        <dbReference type="ChEBI" id="CHEBI:57642"/>
    </ligand>
</feature>
<feature type="binding site" evidence="1">
    <location>
        <begin position="230"/>
        <end position="233"/>
    </location>
    <ligand>
        <name>dihydroxyacetone phosphate</name>
        <dbReference type="ChEBI" id="CHEBI:57642"/>
    </ligand>
</feature>
<comment type="function">
    <text evidence="1">Catalytic subunit of the tagatose-1,6-bisphosphate aldolase KbaYZ, which catalyzes the reversible aldol condensation of dihydroxyacetone phosphate (DHAP or glycerone-phosphate) with glyceraldehyde 3-phosphate (G3P) to produce tagatose 1,6-bisphosphate (TBP). Requires KbaZ subunit for full activity and stability.</text>
</comment>
<comment type="catalytic activity">
    <reaction evidence="1">
        <text>D-tagatofuranose 1,6-bisphosphate = D-glyceraldehyde 3-phosphate + dihydroxyacetone phosphate</text>
        <dbReference type="Rhea" id="RHEA:22948"/>
        <dbReference type="ChEBI" id="CHEBI:57642"/>
        <dbReference type="ChEBI" id="CHEBI:58694"/>
        <dbReference type="ChEBI" id="CHEBI:59776"/>
        <dbReference type="EC" id="4.1.2.40"/>
    </reaction>
</comment>
<comment type="cofactor">
    <cofactor evidence="1">
        <name>Zn(2+)</name>
        <dbReference type="ChEBI" id="CHEBI:29105"/>
    </cofactor>
    <text evidence="1">Binds 1 zinc ion per subunit.</text>
</comment>
<comment type="pathway">
    <text evidence="1">Carbohydrate metabolism; D-tagatose 6-phosphate degradation; D-glyceraldehyde 3-phosphate and glycerone phosphate from D-tagatose 6-phosphate: step 2/2.</text>
</comment>
<comment type="subunit">
    <text evidence="1">Homotetramer. Forms a complex with KbaZ.</text>
</comment>
<comment type="similarity">
    <text evidence="1">Belongs to the class II fructose-bisphosphate aldolase family. TagBP aldolase KbaY subfamily.</text>
</comment>
<name>KBAY_ECOSM</name>
<evidence type="ECO:0000255" key="1">
    <source>
        <dbReference type="HAMAP-Rule" id="MF_01293"/>
    </source>
</evidence>
<accession>B1LFP2</accession>
<organism>
    <name type="scientific">Escherichia coli (strain SMS-3-5 / SECEC)</name>
    <dbReference type="NCBI Taxonomy" id="439855"/>
    <lineage>
        <taxon>Bacteria</taxon>
        <taxon>Pseudomonadati</taxon>
        <taxon>Pseudomonadota</taxon>
        <taxon>Gammaproteobacteria</taxon>
        <taxon>Enterobacterales</taxon>
        <taxon>Enterobacteriaceae</taxon>
        <taxon>Escherichia</taxon>
    </lineage>
</organism>
<reference key="1">
    <citation type="journal article" date="2008" name="J. Bacteriol.">
        <title>Insights into the environmental resistance gene pool from the genome sequence of the multidrug-resistant environmental isolate Escherichia coli SMS-3-5.</title>
        <authorList>
            <person name="Fricke W.F."/>
            <person name="Wright M.S."/>
            <person name="Lindell A.H."/>
            <person name="Harkins D.M."/>
            <person name="Baker-Austin C."/>
            <person name="Ravel J."/>
            <person name="Stepanauskas R."/>
        </authorList>
    </citation>
    <scope>NUCLEOTIDE SEQUENCE [LARGE SCALE GENOMIC DNA]</scope>
    <source>
        <strain>SMS-3-5 / SECEC</strain>
    </source>
</reference>
<dbReference type="EC" id="4.1.2.40" evidence="1"/>
<dbReference type="EMBL" id="CP000970">
    <property type="protein sequence ID" value="ACB18539.1"/>
    <property type="molecule type" value="Genomic_DNA"/>
</dbReference>
<dbReference type="RefSeq" id="WP_000022773.1">
    <property type="nucleotide sequence ID" value="NC_010498.1"/>
</dbReference>
<dbReference type="SMR" id="B1LFP2"/>
<dbReference type="KEGG" id="ecm:EcSMS35_3436"/>
<dbReference type="HOGENOM" id="CLU_040088_0_1_6"/>
<dbReference type="UniPathway" id="UPA00704">
    <property type="reaction ID" value="UER00716"/>
</dbReference>
<dbReference type="Proteomes" id="UP000007011">
    <property type="component" value="Chromosome"/>
</dbReference>
<dbReference type="GO" id="GO:0005829">
    <property type="term" value="C:cytosol"/>
    <property type="evidence" value="ECO:0007669"/>
    <property type="project" value="TreeGrafter"/>
</dbReference>
<dbReference type="GO" id="GO:0009025">
    <property type="term" value="F:tagatose-bisphosphate aldolase activity"/>
    <property type="evidence" value="ECO:0007669"/>
    <property type="project" value="UniProtKB-UniRule"/>
</dbReference>
<dbReference type="GO" id="GO:0008270">
    <property type="term" value="F:zinc ion binding"/>
    <property type="evidence" value="ECO:0007669"/>
    <property type="project" value="UniProtKB-UniRule"/>
</dbReference>
<dbReference type="GO" id="GO:0005975">
    <property type="term" value="P:carbohydrate metabolic process"/>
    <property type="evidence" value="ECO:0007669"/>
    <property type="project" value="InterPro"/>
</dbReference>
<dbReference type="GO" id="GO:2001059">
    <property type="term" value="P:D-tagatose 6-phosphate catabolic process"/>
    <property type="evidence" value="ECO:0007669"/>
    <property type="project" value="UniProtKB-UniRule"/>
</dbReference>
<dbReference type="FunFam" id="3.20.20.70:FF:000043">
    <property type="entry name" value="D-tagatose-1,6-bisphosphate aldolase subunit GatY"/>
    <property type="match status" value="1"/>
</dbReference>
<dbReference type="Gene3D" id="3.20.20.70">
    <property type="entry name" value="Aldolase class I"/>
    <property type="match status" value="1"/>
</dbReference>
<dbReference type="HAMAP" id="MF_01293">
    <property type="entry name" value="TagBP_aldolase_KbaY"/>
    <property type="match status" value="1"/>
</dbReference>
<dbReference type="InterPro" id="IPR013785">
    <property type="entry name" value="Aldolase_TIM"/>
</dbReference>
<dbReference type="InterPro" id="IPR050246">
    <property type="entry name" value="Class_II_FBP_aldolase"/>
</dbReference>
<dbReference type="InterPro" id="IPR000771">
    <property type="entry name" value="FBA_II"/>
</dbReference>
<dbReference type="InterPro" id="IPR023788">
    <property type="entry name" value="TagBP_ald_KbaY"/>
</dbReference>
<dbReference type="InterPro" id="IPR011288">
    <property type="entry name" value="TagBP_ald_KbaY/GatY"/>
</dbReference>
<dbReference type="NCBIfam" id="TIGR00167">
    <property type="entry name" value="cbbA"/>
    <property type="match status" value="1"/>
</dbReference>
<dbReference type="NCBIfam" id="NF006626">
    <property type="entry name" value="PRK09195.1"/>
    <property type="match status" value="1"/>
</dbReference>
<dbReference type="NCBIfam" id="NF009374">
    <property type="entry name" value="PRK12737.1"/>
    <property type="match status" value="1"/>
</dbReference>
<dbReference type="NCBIfam" id="NF009375">
    <property type="entry name" value="PRK12738.1"/>
    <property type="match status" value="1"/>
</dbReference>
<dbReference type="NCBIfam" id="TIGR01858">
    <property type="entry name" value="tag_bisphos_ald"/>
    <property type="match status" value="1"/>
</dbReference>
<dbReference type="PANTHER" id="PTHR30304">
    <property type="entry name" value="D-TAGATOSE-1,6-BISPHOSPHATE ALDOLASE"/>
    <property type="match status" value="1"/>
</dbReference>
<dbReference type="PANTHER" id="PTHR30304:SF0">
    <property type="entry name" value="D-TAGATOSE-1,6-BISPHOSPHATE ALDOLASE SUBUNIT GATY-RELATED"/>
    <property type="match status" value="1"/>
</dbReference>
<dbReference type="Pfam" id="PF01116">
    <property type="entry name" value="F_bP_aldolase"/>
    <property type="match status" value="1"/>
</dbReference>
<dbReference type="PIRSF" id="PIRSF001359">
    <property type="entry name" value="F_bP_aldolase_II"/>
    <property type="match status" value="1"/>
</dbReference>
<dbReference type="SUPFAM" id="SSF51569">
    <property type="entry name" value="Aldolase"/>
    <property type="match status" value="1"/>
</dbReference>
<dbReference type="PROSITE" id="PS00602">
    <property type="entry name" value="ALDOLASE_CLASS_II_1"/>
    <property type="match status" value="1"/>
</dbReference>
<dbReference type="PROSITE" id="PS00806">
    <property type="entry name" value="ALDOLASE_CLASS_II_2"/>
    <property type="match status" value="1"/>
</dbReference>